<gene>
    <name evidence="1" type="primary">ecfA2</name>
    <name type="synonym">cbiO2</name>
    <name type="ordered locus">SPy_2194</name>
    <name type="ordered locus">M5005_Spy1845</name>
</gene>
<sequence>MSINLQNVSYTYQAGTPFEGRALFNINLDILDGSYTAFIGHTGSGKSTIMQLLNGLHVPTTGIVSVDKQDITNHSKNKEIKSIRKHVGLVFQFPESQLFEETVLKDVAFGPQNFGVSPEEAEALAREKLALVGISENLFEKNPFELSGGQMRRVAIAGILAMQPKVLVLDEPTAGLDPKGRKELMTIFKKLHQSGMTIVLVTHLMDDVANYADFVYVLDKGKIILSGKPKTIFQQVSLLEKKQLGVPKVTKLAQRLVDRGIPISSLPITLEELREVLKHG</sequence>
<proteinExistence type="inferred from homology"/>
<dbReference type="EC" id="7.-.-.-" evidence="1"/>
<dbReference type="EMBL" id="AE004092">
    <property type="protein sequence ID" value="AAK34822.1"/>
    <property type="molecule type" value="Genomic_DNA"/>
</dbReference>
<dbReference type="EMBL" id="CP000017">
    <property type="protein sequence ID" value="AAZ52463.1"/>
    <property type="molecule type" value="Genomic_DNA"/>
</dbReference>
<dbReference type="RefSeq" id="NP_270101.1">
    <property type="nucleotide sequence ID" value="NC_002737.2"/>
</dbReference>
<dbReference type="SMR" id="Q99XI2"/>
<dbReference type="PaxDb" id="1314-HKU360_01955"/>
<dbReference type="KEGG" id="spy:SPy_2194"/>
<dbReference type="KEGG" id="spz:M5005_Spy1845"/>
<dbReference type="PATRIC" id="fig|160490.10.peg.1899"/>
<dbReference type="HOGENOM" id="CLU_000604_1_22_9"/>
<dbReference type="OMA" id="MIMYDEP"/>
<dbReference type="Proteomes" id="UP000000750">
    <property type="component" value="Chromosome"/>
</dbReference>
<dbReference type="GO" id="GO:0043190">
    <property type="term" value="C:ATP-binding cassette (ABC) transporter complex"/>
    <property type="evidence" value="ECO:0007669"/>
    <property type="project" value="TreeGrafter"/>
</dbReference>
<dbReference type="GO" id="GO:0005524">
    <property type="term" value="F:ATP binding"/>
    <property type="evidence" value="ECO:0007669"/>
    <property type="project" value="UniProtKB-KW"/>
</dbReference>
<dbReference type="GO" id="GO:0016887">
    <property type="term" value="F:ATP hydrolysis activity"/>
    <property type="evidence" value="ECO:0007669"/>
    <property type="project" value="InterPro"/>
</dbReference>
<dbReference type="GO" id="GO:0042626">
    <property type="term" value="F:ATPase-coupled transmembrane transporter activity"/>
    <property type="evidence" value="ECO:0007669"/>
    <property type="project" value="TreeGrafter"/>
</dbReference>
<dbReference type="CDD" id="cd03225">
    <property type="entry name" value="ABC_cobalt_CbiO_domain1"/>
    <property type="match status" value="1"/>
</dbReference>
<dbReference type="FunFam" id="3.40.50.300:FF:000224">
    <property type="entry name" value="Energy-coupling factor transporter ATP-binding protein EcfA"/>
    <property type="match status" value="1"/>
</dbReference>
<dbReference type="Gene3D" id="3.40.50.300">
    <property type="entry name" value="P-loop containing nucleotide triphosphate hydrolases"/>
    <property type="match status" value="1"/>
</dbReference>
<dbReference type="InterPro" id="IPR003593">
    <property type="entry name" value="AAA+_ATPase"/>
</dbReference>
<dbReference type="InterPro" id="IPR003439">
    <property type="entry name" value="ABC_transporter-like_ATP-bd"/>
</dbReference>
<dbReference type="InterPro" id="IPR017871">
    <property type="entry name" value="ABC_transporter-like_CS"/>
</dbReference>
<dbReference type="InterPro" id="IPR015856">
    <property type="entry name" value="ABC_transpr_CbiO/EcfA_su"/>
</dbReference>
<dbReference type="InterPro" id="IPR050095">
    <property type="entry name" value="ECF_ABC_transporter_ATP-bd"/>
</dbReference>
<dbReference type="InterPro" id="IPR030946">
    <property type="entry name" value="EcfA2"/>
</dbReference>
<dbReference type="InterPro" id="IPR027417">
    <property type="entry name" value="P-loop_NTPase"/>
</dbReference>
<dbReference type="NCBIfam" id="TIGR04521">
    <property type="entry name" value="ECF_ATPase_2"/>
    <property type="match status" value="1"/>
</dbReference>
<dbReference type="PANTHER" id="PTHR43553:SF27">
    <property type="entry name" value="ENERGY-COUPLING FACTOR TRANSPORTER ATP-BINDING PROTEIN ECFA2"/>
    <property type="match status" value="1"/>
</dbReference>
<dbReference type="PANTHER" id="PTHR43553">
    <property type="entry name" value="HEAVY METAL TRANSPORTER"/>
    <property type="match status" value="1"/>
</dbReference>
<dbReference type="Pfam" id="PF00005">
    <property type="entry name" value="ABC_tran"/>
    <property type="match status" value="1"/>
</dbReference>
<dbReference type="SMART" id="SM00382">
    <property type="entry name" value="AAA"/>
    <property type="match status" value="1"/>
</dbReference>
<dbReference type="SUPFAM" id="SSF52540">
    <property type="entry name" value="P-loop containing nucleoside triphosphate hydrolases"/>
    <property type="match status" value="1"/>
</dbReference>
<dbReference type="PROSITE" id="PS00211">
    <property type="entry name" value="ABC_TRANSPORTER_1"/>
    <property type="match status" value="1"/>
</dbReference>
<dbReference type="PROSITE" id="PS50893">
    <property type="entry name" value="ABC_TRANSPORTER_2"/>
    <property type="match status" value="1"/>
</dbReference>
<dbReference type="PROSITE" id="PS51246">
    <property type="entry name" value="CBIO"/>
    <property type="match status" value="1"/>
</dbReference>
<name>ECFA2_STRP1</name>
<reference key="1">
    <citation type="journal article" date="2001" name="Proc. Natl. Acad. Sci. U.S.A.">
        <title>Complete genome sequence of an M1 strain of Streptococcus pyogenes.</title>
        <authorList>
            <person name="Ferretti J.J."/>
            <person name="McShan W.M."/>
            <person name="Ajdic D.J."/>
            <person name="Savic D.J."/>
            <person name="Savic G."/>
            <person name="Lyon K."/>
            <person name="Primeaux C."/>
            <person name="Sezate S."/>
            <person name="Suvorov A.N."/>
            <person name="Kenton S."/>
            <person name="Lai H.S."/>
            <person name="Lin S.P."/>
            <person name="Qian Y."/>
            <person name="Jia H.G."/>
            <person name="Najar F.Z."/>
            <person name="Ren Q."/>
            <person name="Zhu H."/>
            <person name="Song L."/>
            <person name="White J."/>
            <person name="Yuan X."/>
            <person name="Clifton S.W."/>
            <person name="Roe B.A."/>
            <person name="McLaughlin R.E."/>
        </authorList>
    </citation>
    <scope>NUCLEOTIDE SEQUENCE [LARGE SCALE GENOMIC DNA]</scope>
    <source>
        <strain>ATCC 700294 / SF370 / Serotype M1</strain>
    </source>
</reference>
<reference key="2">
    <citation type="journal article" date="2005" name="J. Infect. Dis.">
        <title>Evolutionary origin and emergence of a highly successful clone of serotype M1 group A Streptococcus involved multiple horizontal gene transfer events.</title>
        <authorList>
            <person name="Sumby P."/>
            <person name="Porcella S.F."/>
            <person name="Madrigal A.G."/>
            <person name="Barbian K.D."/>
            <person name="Virtaneva K."/>
            <person name="Ricklefs S.M."/>
            <person name="Sturdevant D.E."/>
            <person name="Graham M.R."/>
            <person name="Vuopio-Varkila J."/>
            <person name="Hoe N.P."/>
            <person name="Musser J.M."/>
        </authorList>
    </citation>
    <scope>NUCLEOTIDE SEQUENCE [LARGE SCALE GENOMIC DNA]</scope>
    <source>
        <strain>ATCC BAA-947 / MGAS5005 / Serotype M1</strain>
    </source>
</reference>
<evidence type="ECO:0000255" key="1">
    <source>
        <dbReference type="HAMAP-Rule" id="MF_01710"/>
    </source>
</evidence>
<feature type="chain" id="PRO_0000092105" description="Energy-coupling factor transporter ATP-binding protein EcfA2">
    <location>
        <begin position="1"/>
        <end position="280"/>
    </location>
</feature>
<feature type="domain" description="ABC transporter" evidence="1">
    <location>
        <begin position="3"/>
        <end position="245"/>
    </location>
</feature>
<feature type="binding site" evidence="1">
    <location>
        <begin position="40"/>
        <end position="47"/>
    </location>
    <ligand>
        <name>ATP</name>
        <dbReference type="ChEBI" id="CHEBI:30616"/>
    </ligand>
</feature>
<protein>
    <recommendedName>
        <fullName evidence="1">Energy-coupling factor transporter ATP-binding protein EcfA2</fullName>
        <shortName evidence="1">ECF transporter A component EcfA2</shortName>
        <ecNumber evidence="1">7.-.-.-</ecNumber>
    </recommendedName>
</protein>
<accession>Q99XI2</accession>
<accession>Q48W12</accession>
<keyword id="KW-0067">ATP-binding</keyword>
<keyword id="KW-1003">Cell membrane</keyword>
<keyword id="KW-0472">Membrane</keyword>
<keyword id="KW-0547">Nucleotide-binding</keyword>
<keyword id="KW-1185">Reference proteome</keyword>
<keyword id="KW-1278">Translocase</keyword>
<keyword id="KW-0813">Transport</keyword>
<organism>
    <name type="scientific">Streptococcus pyogenes serotype M1</name>
    <dbReference type="NCBI Taxonomy" id="301447"/>
    <lineage>
        <taxon>Bacteria</taxon>
        <taxon>Bacillati</taxon>
        <taxon>Bacillota</taxon>
        <taxon>Bacilli</taxon>
        <taxon>Lactobacillales</taxon>
        <taxon>Streptococcaceae</taxon>
        <taxon>Streptococcus</taxon>
    </lineage>
</organism>
<comment type="function">
    <text evidence="1">ATP-binding (A) component of a common energy-coupling factor (ECF) ABC-transporter complex. Unlike classic ABC transporters this ECF transporter provides the energy necessary to transport a number of different substrates.</text>
</comment>
<comment type="subunit">
    <text evidence="1">Forms a stable energy-coupling factor (ECF) transporter complex composed of 2 membrane-embedded substrate-binding proteins (S component), 2 ATP-binding proteins (A component) and 2 transmembrane proteins (T component).</text>
</comment>
<comment type="subcellular location">
    <subcellularLocation>
        <location evidence="1">Cell membrane</location>
        <topology evidence="1">Peripheral membrane protein</topology>
    </subcellularLocation>
</comment>
<comment type="similarity">
    <text evidence="1">Belongs to the ABC transporter superfamily. Energy-coupling factor EcfA family.</text>
</comment>